<reference key="1">
    <citation type="journal article" date="2008" name="J. Bacteriol.">
        <title>The complete genome sequence of Thermococcus onnurineus NA1 reveals a mixed heterotrophic and carboxydotrophic metabolism.</title>
        <authorList>
            <person name="Lee H.S."/>
            <person name="Kang S.G."/>
            <person name="Bae S.S."/>
            <person name="Lim J.K."/>
            <person name="Cho Y."/>
            <person name="Kim Y.J."/>
            <person name="Jeon J.H."/>
            <person name="Cha S.-S."/>
            <person name="Kwon K.K."/>
            <person name="Kim H.-T."/>
            <person name="Park C.-J."/>
            <person name="Lee H.-W."/>
            <person name="Kim S.I."/>
            <person name="Chun J."/>
            <person name="Colwell R.R."/>
            <person name="Kim S.-J."/>
            <person name="Lee J.-H."/>
        </authorList>
    </citation>
    <scope>NUCLEOTIDE SEQUENCE [LARGE SCALE GENOMIC DNA]</scope>
    <source>
        <strain>NA1</strain>
    </source>
</reference>
<name>RSMA_THEON</name>
<dbReference type="EC" id="2.1.1.-" evidence="1"/>
<dbReference type="EMBL" id="CP000855">
    <property type="protein sequence ID" value="ACJ15894.1"/>
    <property type="molecule type" value="Genomic_DNA"/>
</dbReference>
<dbReference type="RefSeq" id="WP_012571366.1">
    <property type="nucleotide sequence ID" value="NC_011529.1"/>
</dbReference>
<dbReference type="SMR" id="B6YTK7"/>
<dbReference type="STRING" id="523850.TON_0409"/>
<dbReference type="GeneID" id="7016704"/>
<dbReference type="KEGG" id="ton:TON_0409"/>
<dbReference type="PATRIC" id="fig|523850.10.peg.411"/>
<dbReference type="eggNOG" id="arCOG04131">
    <property type="taxonomic scope" value="Archaea"/>
</dbReference>
<dbReference type="HOGENOM" id="CLU_041220_0_2_2"/>
<dbReference type="OrthoDB" id="9883at2157"/>
<dbReference type="Proteomes" id="UP000002727">
    <property type="component" value="Chromosome"/>
</dbReference>
<dbReference type="GO" id="GO:0005737">
    <property type="term" value="C:cytoplasm"/>
    <property type="evidence" value="ECO:0007669"/>
    <property type="project" value="UniProtKB-SubCell"/>
</dbReference>
<dbReference type="GO" id="GO:0003723">
    <property type="term" value="F:RNA binding"/>
    <property type="evidence" value="ECO:0007669"/>
    <property type="project" value="UniProtKB-KW"/>
</dbReference>
<dbReference type="GO" id="GO:0000179">
    <property type="term" value="F:rRNA (adenine-N6,N6-)-dimethyltransferase activity"/>
    <property type="evidence" value="ECO:0007669"/>
    <property type="project" value="InterPro"/>
</dbReference>
<dbReference type="CDD" id="cd02440">
    <property type="entry name" value="AdoMet_MTases"/>
    <property type="match status" value="1"/>
</dbReference>
<dbReference type="FunFam" id="3.40.50.150:FF:000023">
    <property type="entry name" value="Ribosomal RNA small subunit methyltransferase A"/>
    <property type="match status" value="1"/>
</dbReference>
<dbReference type="Gene3D" id="1.10.8.100">
    <property type="entry name" value="Ribosomal RNA adenine dimethylase-like, domain 2"/>
    <property type="match status" value="1"/>
</dbReference>
<dbReference type="Gene3D" id="3.40.50.150">
    <property type="entry name" value="Vaccinia Virus protein VP39"/>
    <property type="match status" value="1"/>
</dbReference>
<dbReference type="HAMAP" id="MF_00607">
    <property type="entry name" value="16SrRNA_methyltr_A"/>
    <property type="match status" value="1"/>
</dbReference>
<dbReference type="InterPro" id="IPR001737">
    <property type="entry name" value="KsgA/Erm"/>
</dbReference>
<dbReference type="InterPro" id="IPR023165">
    <property type="entry name" value="rRNA_Ade_diMease-like_C"/>
</dbReference>
<dbReference type="InterPro" id="IPR020596">
    <property type="entry name" value="rRNA_Ade_Mease_Trfase_CS"/>
</dbReference>
<dbReference type="InterPro" id="IPR020598">
    <property type="entry name" value="rRNA_Ade_methylase_Trfase_N"/>
</dbReference>
<dbReference type="InterPro" id="IPR011530">
    <property type="entry name" value="rRNA_adenine_dimethylase"/>
</dbReference>
<dbReference type="InterPro" id="IPR029063">
    <property type="entry name" value="SAM-dependent_MTases_sf"/>
</dbReference>
<dbReference type="NCBIfam" id="TIGR00755">
    <property type="entry name" value="ksgA"/>
    <property type="match status" value="1"/>
</dbReference>
<dbReference type="PANTHER" id="PTHR11727">
    <property type="entry name" value="DIMETHYLADENOSINE TRANSFERASE"/>
    <property type="match status" value="1"/>
</dbReference>
<dbReference type="PANTHER" id="PTHR11727:SF7">
    <property type="entry name" value="DIMETHYLADENOSINE TRANSFERASE-RELATED"/>
    <property type="match status" value="1"/>
</dbReference>
<dbReference type="Pfam" id="PF00398">
    <property type="entry name" value="RrnaAD"/>
    <property type="match status" value="1"/>
</dbReference>
<dbReference type="SMART" id="SM00650">
    <property type="entry name" value="rADc"/>
    <property type="match status" value="1"/>
</dbReference>
<dbReference type="SUPFAM" id="SSF53335">
    <property type="entry name" value="S-adenosyl-L-methionine-dependent methyltransferases"/>
    <property type="match status" value="1"/>
</dbReference>
<dbReference type="PROSITE" id="PS01131">
    <property type="entry name" value="RRNA_A_DIMETH"/>
    <property type="match status" value="1"/>
</dbReference>
<dbReference type="PROSITE" id="PS51689">
    <property type="entry name" value="SAM_RNA_A_N6_MT"/>
    <property type="match status" value="1"/>
</dbReference>
<protein>
    <recommendedName>
        <fullName evidence="1">Probable ribosomal RNA small subunit methyltransferase A</fullName>
        <ecNumber evidence="1">2.1.1.-</ecNumber>
    </recommendedName>
    <alternativeName>
        <fullName evidence="1">16S rRNA dimethyladenosine transferase</fullName>
    </alternativeName>
    <alternativeName>
        <fullName evidence="1">16S rRNA dimethylase</fullName>
    </alternativeName>
    <alternativeName>
        <fullName evidence="1">S-adenosylmethionine-6-N',N'-adenosyl(rRNA) dimethyltransferase</fullName>
    </alternativeName>
</protein>
<keyword id="KW-0963">Cytoplasm</keyword>
<keyword id="KW-0489">Methyltransferase</keyword>
<keyword id="KW-0694">RNA-binding</keyword>
<keyword id="KW-0698">rRNA processing</keyword>
<keyword id="KW-0949">S-adenosyl-L-methionine</keyword>
<keyword id="KW-0808">Transferase</keyword>
<evidence type="ECO:0000255" key="1">
    <source>
        <dbReference type="HAMAP-Rule" id="MF_00607"/>
    </source>
</evidence>
<feature type="chain" id="PRO_1000130330" description="Probable ribosomal RNA small subunit methyltransferase A">
    <location>
        <begin position="1"/>
        <end position="272"/>
    </location>
</feature>
<feature type="binding site" evidence="1">
    <location>
        <position position="23"/>
    </location>
    <ligand>
        <name>S-adenosyl-L-methionine</name>
        <dbReference type="ChEBI" id="CHEBI:59789"/>
    </ligand>
</feature>
<feature type="binding site" evidence="1">
    <location>
        <position position="25"/>
    </location>
    <ligand>
        <name>S-adenosyl-L-methionine</name>
        <dbReference type="ChEBI" id="CHEBI:59789"/>
    </ligand>
</feature>
<feature type="binding site" evidence="1">
    <location>
        <position position="50"/>
    </location>
    <ligand>
        <name>S-adenosyl-L-methionine</name>
        <dbReference type="ChEBI" id="CHEBI:59789"/>
    </ligand>
</feature>
<feature type="binding site" evidence="1">
    <location>
        <position position="71"/>
    </location>
    <ligand>
        <name>S-adenosyl-L-methionine</name>
        <dbReference type="ChEBI" id="CHEBI:59789"/>
    </ligand>
</feature>
<feature type="binding site" evidence="1">
    <location>
        <position position="95"/>
    </location>
    <ligand>
        <name>S-adenosyl-L-methionine</name>
        <dbReference type="ChEBI" id="CHEBI:59789"/>
    </ligand>
</feature>
<feature type="binding site" evidence="1">
    <location>
        <position position="110"/>
    </location>
    <ligand>
        <name>S-adenosyl-L-methionine</name>
        <dbReference type="ChEBI" id="CHEBI:59789"/>
    </ligand>
</feature>
<gene>
    <name evidence="1" type="primary">rsmA</name>
    <name evidence="1" type="synonym">ksgA</name>
    <name type="ordered locus">TON_0409</name>
</gene>
<accession>B6YTK7</accession>
<comment type="function">
    <text evidence="1">Specifically dimethylates two adjacent adenosines in the loop of a conserved hairpin near the 3'-end of 16S rRNA in the 30S particle. May play a critical role in biogenesis of 30S subunits.</text>
</comment>
<comment type="subcellular location">
    <subcellularLocation>
        <location evidence="1">Cytoplasm</location>
    </subcellularLocation>
</comment>
<comment type="similarity">
    <text evidence="1">Belongs to the class I-like SAM-binding methyltransferase superfamily. rRNA adenine N(6)-methyltransferase family. RsmA subfamily.</text>
</comment>
<proteinExistence type="inferred from homology"/>
<sequence>MRERLFSLISKYGLRANSDLGQNFLIVDDIIERNVERAELSGRDVVLEIGPGLGVLTDALSKRAGKVYAIEKDPRLVEILRKEYNWSNVEIIEGDALKVDFPEFNKIVSNLPYQISSPITFRFLGYGFERAVLIYQLEFAQRMVARPGDRNYSRLSLMVQAKSYVELVERIGRGAFYPRPKVDSAVIVLEPKPKSEVIELNEDLVRALFQHRRSTVAAALKKSHHMLGLSKAEFKNVKDVISSAPYAEKRVFQLSPEEVKEIEAYLKVNNII</sequence>
<organism>
    <name type="scientific">Thermococcus onnurineus (strain NA1)</name>
    <dbReference type="NCBI Taxonomy" id="523850"/>
    <lineage>
        <taxon>Archaea</taxon>
        <taxon>Methanobacteriati</taxon>
        <taxon>Methanobacteriota</taxon>
        <taxon>Thermococci</taxon>
        <taxon>Thermococcales</taxon>
        <taxon>Thermococcaceae</taxon>
        <taxon>Thermococcus</taxon>
    </lineage>
</organism>